<proteinExistence type="evidence at protein level"/>
<keyword id="KW-0002">3D-structure</keyword>
<keyword id="KW-0158">Chromosome</keyword>
<keyword id="KW-0238">DNA-binding</keyword>
<keyword id="KW-1017">Isopeptide bond</keyword>
<keyword id="KW-0479">Metal-binding</keyword>
<keyword id="KW-0488">Methylation</keyword>
<keyword id="KW-0539">Nucleus</keyword>
<keyword id="KW-0597">Phosphoprotein</keyword>
<keyword id="KW-1185">Reference proteome</keyword>
<keyword id="KW-0694">RNA-binding</keyword>
<keyword id="KW-0832">Ubl conjugation</keyword>
<keyword id="KW-0862">Zinc</keyword>
<keyword id="KW-0863">Zinc-finger</keyword>
<feature type="chain" id="PRO_0000071515" description="Serine/threonine-protein phosphatase 1 regulatory subunit 10">
    <location>
        <begin position="1"/>
        <end position="872"/>
    </location>
</feature>
<feature type="domain" description="TFIIS N-terminal" evidence="3">
    <location>
        <begin position="73"/>
        <end position="147"/>
    </location>
</feature>
<feature type="zinc finger region" description="C3H1-type" evidence="4">
    <location>
        <begin position="838"/>
        <end position="866"/>
    </location>
</feature>
<feature type="region of interest" description="Interaction with TOX4" evidence="1">
    <location>
        <begin position="1"/>
        <end position="348"/>
    </location>
</feature>
<feature type="region of interest" description="Disordered" evidence="5">
    <location>
        <begin position="147"/>
        <end position="213"/>
    </location>
</feature>
<feature type="region of interest" description="Disordered" evidence="5">
    <location>
        <begin position="247"/>
        <end position="270"/>
    </location>
</feature>
<feature type="region of interest" description="Disordered" evidence="5">
    <location>
        <begin position="307"/>
        <end position="398"/>
    </location>
</feature>
<feature type="region of interest" description="Necessary for interaction with PPP1CA" evidence="8">
    <location>
        <begin position="357"/>
        <end position="433"/>
    </location>
</feature>
<feature type="region of interest" description="Necessary for interaction with PPP1CC" evidence="2">
    <location>
        <begin position="393"/>
        <end position="408"/>
    </location>
</feature>
<feature type="region of interest" description="Interaction with WDR82" evidence="1">
    <location>
        <begin position="418"/>
        <end position="619"/>
    </location>
</feature>
<feature type="region of interest" description="Disordered" evidence="5">
    <location>
        <begin position="534"/>
        <end position="837"/>
    </location>
</feature>
<feature type="short sequence motif" description="PP1-binding motif" evidence="7">
    <location>
        <begin position="394"/>
        <end position="423"/>
    </location>
</feature>
<feature type="compositionally biased region" description="Basic and acidic residues" evidence="5">
    <location>
        <begin position="153"/>
        <end position="166"/>
    </location>
</feature>
<feature type="compositionally biased region" description="Basic and acidic residues" evidence="5">
    <location>
        <begin position="174"/>
        <end position="196"/>
    </location>
</feature>
<feature type="compositionally biased region" description="Low complexity" evidence="5">
    <location>
        <begin position="248"/>
        <end position="258"/>
    </location>
</feature>
<feature type="compositionally biased region" description="Low complexity" evidence="5">
    <location>
        <begin position="325"/>
        <end position="336"/>
    </location>
</feature>
<feature type="compositionally biased region" description="Gly residues" evidence="5">
    <location>
        <begin position="540"/>
        <end position="551"/>
    </location>
</feature>
<feature type="compositionally biased region" description="Polar residues" evidence="5">
    <location>
        <begin position="583"/>
        <end position="595"/>
    </location>
</feature>
<feature type="compositionally biased region" description="Basic and acidic residues" evidence="5">
    <location>
        <begin position="596"/>
        <end position="611"/>
    </location>
</feature>
<feature type="compositionally biased region" description="Pro residues" evidence="5">
    <location>
        <begin position="644"/>
        <end position="655"/>
    </location>
</feature>
<feature type="compositionally biased region" description="Low complexity" evidence="5">
    <location>
        <begin position="674"/>
        <end position="690"/>
    </location>
</feature>
<feature type="compositionally biased region" description="Gly residues" evidence="5">
    <location>
        <begin position="724"/>
        <end position="762"/>
    </location>
</feature>
<feature type="compositionally biased region" description="Basic and acidic residues" evidence="5">
    <location>
        <begin position="795"/>
        <end position="835"/>
    </location>
</feature>
<feature type="modified residue" description="Phosphoserine" evidence="16">
    <location>
        <position position="313"/>
    </location>
</feature>
<feature type="modified residue" description="Phosphoserine" evidence="16">
    <location>
        <position position="382"/>
    </location>
</feature>
<feature type="modified residue" description="Phosphothreonine; by PKA" evidence="6">
    <location>
        <position position="398"/>
    </location>
</feature>
<feature type="modified residue" description="Phosphoserine" evidence="2">
    <location>
        <position position="545"/>
    </location>
</feature>
<feature type="modified residue" description="Phosphoserine" evidence="16">
    <location>
        <position position="591"/>
    </location>
</feature>
<feature type="modified residue" description="Omega-N-methylarginine" evidence="2">
    <location>
        <position position="665"/>
    </location>
</feature>
<feature type="modified residue" description="Omega-N-methylarginine" evidence="2">
    <location>
        <position position="693"/>
    </location>
</feature>
<feature type="modified residue" description="Omega-N-methylarginine" evidence="1">
    <location>
        <position position="737"/>
    </location>
</feature>
<feature type="cross-link" description="Glycyl lysine isopeptide (Lys-Gly) (interchain with G-Cter in SUMO2)" evidence="2">
    <location>
        <position position="179"/>
    </location>
</feature>
<feature type="cross-link" description="Glycyl lysine isopeptide (Lys-Gly) (interchain with G-Cter in SUMO2)" evidence="2">
    <location>
        <position position="262"/>
    </location>
</feature>
<feature type="mutagenesis site" description="Does not abolish interaction with PPP1CA and does not reduce PPP1CA inhibition." evidence="6">
    <original>R</original>
    <variation>A</variation>
    <location>
        <position position="396"/>
    </location>
</feature>
<feature type="mutagenesis site" description="Does not abolish interaction with PPP1CA and reduces a little PPP1CA inhibition." evidence="6">
    <original>K</original>
    <variation>A</variation>
    <location>
        <position position="397"/>
    </location>
</feature>
<feature type="mutagenesis site" description="Reduces interaction with PPP1CA and reduces strongly PPP1CA inhibition." evidence="6">
    <original>V</original>
    <variation>A</variation>
    <location>
        <position position="399"/>
    </location>
</feature>
<feature type="mutagenesis site" description="Abolishes interaction with PPP1CA and PPP1CA inhibition." evidence="6">
    <original>W</original>
    <variation>A</variation>
    <location>
        <position position="401"/>
    </location>
</feature>
<feature type="mutagenesis site" description="Abolishes PPP1CA inhibition." evidence="6">
    <location>
        <begin position="445"/>
        <end position="450"/>
    </location>
</feature>
<feature type="helix" evidence="18">
    <location>
        <begin position="9"/>
        <end position="14"/>
    </location>
</feature>
<feature type="helix" evidence="18">
    <location>
        <begin position="16"/>
        <end position="18"/>
    </location>
</feature>
<feature type="strand" evidence="18">
    <location>
        <begin position="21"/>
        <end position="27"/>
    </location>
</feature>
<feature type="helix" evidence="18">
    <location>
        <begin position="28"/>
        <end position="38"/>
    </location>
</feature>
<feature type="helix" evidence="18">
    <location>
        <begin position="44"/>
        <end position="56"/>
    </location>
</feature>
<feature type="helix" evidence="18">
    <location>
        <begin position="60"/>
        <end position="68"/>
    </location>
</feature>
<feature type="helix" evidence="18">
    <location>
        <begin position="71"/>
        <end position="84"/>
    </location>
</feature>
<feature type="helix" evidence="18">
    <location>
        <begin position="88"/>
        <end position="100"/>
    </location>
</feature>
<feature type="helix" evidence="18">
    <location>
        <begin position="105"/>
        <end position="111"/>
    </location>
</feature>
<feature type="helix" evidence="18">
    <location>
        <begin position="113"/>
        <end position="123"/>
    </location>
</feature>
<feature type="helix" evidence="18">
    <location>
        <begin position="127"/>
        <end position="146"/>
    </location>
</feature>
<feature type="helix" evidence="17">
    <location>
        <begin position="404"/>
        <end position="406"/>
    </location>
</feature>
<feature type="strand" evidence="17">
    <location>
        <begin position="407"/>
        <end position="413"/>
    </location>
</feature>
<gene>
    <name evidence="11" type="primary">Ppp1r10</name>
    <name evidence="9" type="synonym">Pnuts</name>
</gene>
<reference key="1">
    <citation type="journal article" date="1998" name="J. Biol. Chem.">
        <title>Isolation and characterization of PNUTS, a putative protein phosphatase 1 nuclear targeting subunit.</title>
        <authorList>
            <person name="Allen P.B."/>
            <person name="Kwon Y.G."/>
            <person name="Nairn A.C."/>
            <person name="Greengard P."/>
        </authorList>
    </citation>
    <scope>NUCLEOTIDE SEQUENCE [MRNA]</scope>
    <scope>FUNCTION IN PPP1CA INHIBITION</scope>
    <scope>INTERACTION WITH PPP1CA</scope>
    <scope>TISSUE SPECIFICITY</scope>
    <scope>SUBCELLULAR LOCATION</scope>
    <source>
        <strain>Sprague-Dawley</strain>
        <tissue>Hippocampus</tissue>
    </source>
</reference>
<reference key="2">
    <citation type="journal article" date="2004" name="Genome Res.">
        <title>The genomic sequence and comparative analysis of the rat major histocompatibility complex.</title>
        <authorList>
            <person name="Hurt P."/>
            <person name="Walter L."/>
            <person name="Sudbrak R."/>
            <person name="Klages S."/>
            <person name="Mueller I."/>
            <person name="Shiina T."/>
            <person name="Inoko H."/>
            <person name="Lehrach H."/>
            <person name="Guenther E."/>
            <person name="Reinhardt R."/>
            <person name="Himmelbauer H."/>
        </authorList>
    </citation>
    <scope>NUCLEOTIDE SEQUENCE [LARGE SCALE GENOMIC DNA]</scope>
    <source>
        <strain>Brown Norway</strain>
    </source>
</reference>
<reference key="3">
    <citation type="journal article" date="2003" name="J. Biol. Chem.">
        <title>PNUTS, a protein phosphatase 1 (PP1) nuclear targeting subunit. Characterization of its PP1- and RNA-binding domains and regulation by phosphorylation.</title>
        <authorList>
            <person name="Kim Y.M."/>
            <person name="Watanabe T."/>
            <person name="Allen P.B."/>
            <person name="Kim Y.M."/>
            <person name="Lee S.J."/>
            <person name="Greengard P."/>
            <person name="Nairn A.C."/>
            <person name="Kwon Y.G."/>
        </authorList>
    </citation>
    <scope>FUNCTION IN PPP1CA INHIBITION</scope>
    <scope>IDENTIFICATION IN A COMPLEX WITH PPP1CA AND RNA HOMOPOLYMERS</scope>
    <scope>PHOSPHORYLATION AT THR-398</scope>
    <scope>MUTAGENESIS OF ARG-396; LYS-397; VAL-399; TRP-401 AND 445-GLU--LEU-450</scope>
    <scope>DNA-BINDING</scope>
    <scope>RNA-BINDING</scope>
    <scope>TISSUE SPECIFICITY</scope>
    <scope>SUBCELLULAR LOCATION</scope>
</reference>
<reference key="4">
    <citation type="journal article" date="2012" name="Nat. Commun.">
        <title>Quantitative maps of protein phosphorylation sites across 14 different rat organs and tissues.</title>
        <authorList>
            <person name="Lundby A."/>
            <person name="Secher A."/>
            <person name="Lage K."/>
            <person name="Nordsborg N.B."/>
            <person name="Dmytriyev A."/>
            <person name="Lundby C."/>
            <person name="Olsen J.V."/>
        </authorList>
    </citation>
    <scope>PHOSPHORYLATION [LARGE SCALE ANALYSIS] AT SER-313; SER-382 AND SER-591</scope>
    <scope>IDENTIFICATION BY MASS SPECTROMETRY [LARGE SCALE ANALYSIS]</scope>
</reference>
<reference evidence="12 13" key="5">
    <citation type="journal article" date="2014" name="Proc. Natl. Acad. Sci. U.S.A.">
        <title>Understanding the antagonism of retinoblastoma protein dephosphorylation by PNUTS provides insights into the PP1 regulatory code.</title>
        <authorList>
            <person name="Choy M.S."/>
            <person name="Hieke M."/>
            <person name="Kumar G.S."/>
            <person name="Lewis G.R."/>
            <person name="Gonzalez-DeWhitt K.R."/>
            <person name="Kessler R.P."/>
            <person name="Stein B.J."/>
            <person name="Stein B.J."/>
            <person name="Hessenberger M."/>
            <person name="Nairn A.C."/>
            <person name="Peti W."/>
            <person name="Page R."/>
        </authorList>
    </citation>
    <scope>X-RAY CRYSTALLOGRAPHY (2.10 ANGSTROMS) OF 394-433 IN COMPLEX WITH HUMAN PPP1CA</scope>
    <scope>FUNCTION</scope>
    <scope>INTERACTION WITH PPP1CA</scope>
</reference>
<reference evidence="14 15" key="6">
    <citation type="journal article" date="2022" name="Nucleic Acids Res.">
        <title>The MYC oncoprotein directly interacts with its chromatin cofactor PNUTS to recruit PP1 phosphatase.</title>
        <authorList>
            <person name="Wei Y."/>
            <person name="Redel C."/>
            <person name="Ahlner A."/>
            <person name="Lemak A."/>
            <person name="Johansson-Akhe I."/>
            <person name="Houliston S."/>
            <person name="Kenney T.M.G."/>
            <person name="Tamachi A."/>
            <person name="Morad V."/>
            <person name="Duan S."/>
            <person name="Andrews D.W."/>
            <person name="Wallner B."/>
            <person name="Sunnerhagen M."/>
            <person name="Arrowsmith C.H."/>
            <person name="Penn L.Z."/>
        </authorList>
    </citation>
    <scope>STRUCTURE BY NMR OF 1-148 IN COMPLEX WITH MYC</scope>
</reference>
<protein>
    <recommendedName>
        <fullName evidence="10">Serine/threonine-protein phosphatase 1 regulatory subunit 10</fullName>
    </recommendedName>
    <alternativeName>
        <fullName evidence="9">Phosphatase 1 nuclear targeting subunit</fullName>
    </alternativeName>
</protein>
<comment type="function">
    <text evidence="1 2 6 7 8">Substrate-recognition component of the PNUTS-PP1 protein phosphatase complex, a protein phosphatase 1 (PP1) complex that promotes RNA polymerase II transcription pause-release, allowing transcription elongation (By similarity). Promoter-proximal pausing by RNA polymerase II is a transcription halt following transcription initiation but prior to elongation, which acts as a checkpoint to control that transcripts are favorably configured for transcriptional elongation (By similarity). The PNUTS-PP1 complex mediates the release of RNA polymerase II from promoter-proximal region of genes by catalyzing dephosphorylation of proteins involved in transcription, such as AFF4, CDK9, MEPCE, INTS12, NCBP1, POLR2M/GDOWN1 and SUPT6H (By similarity). The PNUTS-PP1 complex also regulates RNA polymerase II transcription termination by mediating dephosphorylation of SUPT5H in termination zones downstream of poly(A) sites, thereby promoting deceleration of RNA polymerase II transcription (By similarity). PNUTS-PP1 complex is also involved in the response to replication stress by mediating dephosphorylation of POLR2A at 'Ser-5' of the CTD, promoting RNA polymerase II degradation (By similarity). The PNUTS-PP1 complex also plays a role in the control of chromatin structure and cell cycle progression during the transition from mitosis into interphase (By similarity). PNUTS-PP1 complex mediates dephosphorylation of MYC, promoting MYC stability by preventing MYC ubiquitination by the SCF(FBXW7) complex (By similarity). In addition to acts as a substrate-recognition component, PPP1R10/PNUTS also acts as a nuclear targeting subunit for the PNUTS-PP1 complex (By similarity). In some context, PPP1R10/PNUTS also acts as an inhibitor of protein phosphatase 1 (PP1) activity by preventing access to substrates (PubMed:12574161, PubMed:24591642, PubMed:9461602).</text>
</comment>
<comment type="subunit">
    <text evidence="7">Component of the PNUTS-PP1 complex (also named PTW/PP1 complex), composed of PPP1R10/PNUTS, TOX4, WDR82, and PPP1CA (or PPP1CB or PPP1CC).</text>
</comment>
<comment type="subcellular location">
    <subcellularLocation>
        <location evidence="2 3">Nucleus</location>
    </subcellularLocation>
    <subcellularLocation>
        <location evidence="2">Chromosome</location>
    </subcellularLocation>
    <text evidence="1 2">Found in discrete nucleoplasmic bodies and within nucleoli. Associates with RNA polymerase II (Pol II) on chromatin during pause-release checkpoint (By similarity). Associates with chromatin during interphase, excluded from condensed chromosomes during early mitosis and is reloaded onto chromosomes at the late telophase (By similarity).</text>
</comment>
<comment type="tissue specificity">
    <text evidence="6 8">Expressed in testis, brain and intestine (at protein level). Highly expressed in testis.</text>
</comment>
<comment type="domain">
    <text evidence="2">The TFIIS N-terminal domain specifically recognizes disordered sequences in protein substrates that are then dephosphorylated by PPP1CA (or PPP1CB or PPP1CC).</text>
</comment>
<comment type="PTM">
    <text evidence="6">Phosphorylated on Thr-398 by PKA within the region necessary for interaction with PPP1CA.</text>
</comment>
<comment type="sequence caution" evidence="10">
    <conflict type="erroneous gene model prediction">
        <sequence resource="EMBL-CDS" id="CAE84038"/>
    </conflict>
</comment>
<name>PP1RA_RAT</name>
<sequence>MGSGPIDPKELLKGLDSFLTRDGEVKSVDGIAKIFSLMKEARKMVSRCTYLNIILQTRAPEVLVKFIDVGGYKLLNSWLTYSKTTNNIPLLQQILLTLQHLPLTVDHLKQNNTAKLVKQLSKSSEDEELRKLASVLVSDWMAVIRSQSSTQPAEKDKKKRKEEGKSRTTLPERPLTEVKAETRAEEAPEKKKEKPKSLRTTAPSHAKFRSTGLELDTPSLVPVKKNSSTVVVSDKYNLKPIPLKRQSATAAPGDAAPPAEKKYKPLNTTPNTTKEIKVKIIPPQPMEGLGFLDALNSAPVPGIKIKKKKKVLSPTAAKPSPFEGKTSTEPSTAKPSSPEPAAPAEPMDTDRPGTPVPAVEVPELMDAASSEPGALDAKPVESPGDPNQLTRKGRKRKTVTWPEEGKLREYFYFELDETERVNVNKIKDFGEAAKREILSDRHAFETARRLSHDNMEEKVPWVCPRPLVLPSPLVIPGSNSQERYIQAEREKGILQELFLNKESPHEPDPEPYEPIPPKLIPLDEECAMDETPYVETLEPGGSGGSPDGAGGSKLPPVLANLMGSMGAGKSPQGPGGGGINVQEILTSIMGSPNNHPSEELLKQPDYSDKLKQMLVPHGLLGPGPVANGFPPGGPGGPKGMQHFPPGPGGPMPGPHGGPGGPVGPRLLGPPPPSRGGDPFWDGPGDPMRGGPMRGGPGPGPGPYHRGRGGRGGNEPPPPPPFRGARGGRSGGGPPNGRGGPGGGGMVGGGGHRPHEGPGGSMGSGHRSHEGPGGSMGSGHRSHEGPGHGGPHGHRPHDVPSHRGHDHRGPPPHEHRGHDGHGGGGHRGHDGGHSHGGDMSNRPVCRHFMMKGNCRYENNCAFYHPGVNGPPLP</sequence>
<accession>O55000</accession>
<accession>Q6MG09</accession>
<evidence type="ECO:0000250" key="1">
    <source>
        <dbReference type="UniProtKB" id="Q80W00"/>
    </source>
</evidence>
<evidence type="ECO:0000250" key="2">
    <source>
        <dbReference type="UniProtKB" id="Q96QC0"/>
    </source>
</evidence>
<evidence type="ECO:0000255" key="3">
    <source>
        <dbReference type="PROSITE-ProRule" id="PRU00649"/>
    </source>
</evidence>
<evidence type="ECO:0000255" key="4">
    <source>
        <dbReference type="PROSITE-ProRule" id="PRU00723"/>
    </source>
</evidence>
<evidence type="ECO:0000256" key="5">
    <source>
        <dbReference type="SAM" id="MobiDB-lite"/>
    </source>
</evidence>
<evidence type="ECO:0000269" key="6">
    <source>
    </source>
</evidence>
<evidence type="ECO:0000269" key="7">
    <source>
    </source>
</evidence>
<evidence type="ECO:0000269" key="8">
    <source>
    </source>
</evidence>
<evidence type="ECO:0000303" key="9">
    <source>
    </source>
</evidence>
<evidence type="ECO:0000305" key="10"/>
<evidence type="ECO:0000312" key="11">
    <source>
        <dbReference type="RGD" id="620079"/>
    </source>
</evidence>
<evidence type="ECO:0007744" key="12">
    <source>
        <dbReference type="PDB" id="4MOY"/>
    </source>
</evidence>
<evidence type="ECO:0007744" key="13">
    <source>
        <dbReference type="PDB" id="4MP0"/>
    </source>
</evidence>
<evidence type="ECO:0007744" key="14">
    <source>
        <dbReference type="PDB" id="6VTI"/>
    </source>
</evidence>
<evidence type="ECO:0007744" key="15">
    <source>
        <dbReference type="PDB" id="7LQT"/>
    </source>
</evidence>
<evidence type="ECO:0007744" key="16">
    <source>
    </source>
</evidence>
<evidence type="ECO:0007829" key="17">
    <source>
        <dbReference type="PDB" id="4MP0"/>
    </source>
</evidence>
<evidence type="ECO:0007829" key="18">
    <source>
        <dbReference type="PDB" id="6VTI"/>
    </source>
</evidence>
<organism>
    <name type="scientific">Rattus norvegicus</name>
    <name type="common">Rat</name>
    <dbReference type="NCBI Taxonomy" id="10116"/>
    <lineage>
        <taxon>Eukaryota</taxon>
        <taxon>Metazoa</taxon>
        <taxon>Chordata</taxon>
        <taxon>Craniata</taxon>
        <taxon>Vertebrata</taxon>
        <taxon>Euteleostomi</taxon>
        <taxon>Mammalia</taxon>
        <taxon>Eutheria</taxon>
        <taxon>Euarchontoglires</taxon>
        <taxon>Glires</taxon>
        <taxon>Rodentia</taxon>
        <taxon>Myomorpha</taxon>
        <taxon>Muroidea</taxon>
        <taxon>Muridae</taxon>
        <taxon>Murinae</taxon>
        <taxon>Rattus</taxon>
    </lineage>
</organism>
<dbReference type="EMBL" id="AF040954">
    <property type="protein sequence ID" value="AAB96775.1"/>
    <property type="molecule type" value="mRNA"/>
</dbReference>
<dbReference type="EMBL" id="BX883048">
    <property type="protein sequence ID" value="CAE84038.1"/>
    <property type="status" value="ALT_SEQ"/>
    <property type="molecule type" value="Genomic_DNA"/>
</dbReference>
<dbReference type="RefSeq" id="NP_075240.1">
    <property type="nucleotide sequence ID" value="NM_022951.2"/>
</dbReference>
<dbReference type="RefSeq" id="XP_038954983.1">
    <property type="nucleotide sequence ID" value="XM_039099055.2"/>
</dbReference>
<dbReference type="PDB" id="4MOY">
    <property type="method" value="X-ray"/>
    <property type="resolution" value="2.20 A"/>
    <property type="chains" value="B=393-433"/>
</dbReference>
<dbReference type="PDB" id="4MP0">
    <property type="method" value="X-ray"/>
    <property type="resolution" value="2.10 A"/>
    <property type="chains" value="B/D=394-433"/>
</dbReference>
<dbReference type="PDB" id="6VTI">
    <property type="method" value="NMR"/>
    <property type="chains" value="A=1-148"/>
</dbReference>
<dbReference type="PDB" id="7LQT">
    <property type="method" value="NMR"/>
    <property type="chains" value="A=1-148"/>
</dbReference>
<dbReference type="PDBsum" id="4MOY"/>
<dbReference type="PDBsum" id="4MP0"/>
<dbReference type="PDBsum" id="6VTI"/>
<dbReference type="PDBsum" id="7LQT"/>
<dbReference type="BMRB" id="O55000"/>
<dbReference type="SMR" id="O55000"/>
<dbReference type="FunCoup" id="O55000">
    <property type="interactions" value="3572"/>
</dbReference>
<dbReference type="STRING" id="10116.ENSRNOP00000072634"/>
<dbReference type="iPTMnet" id="O55000"/>
<dbReference type="PhosphoSitePlus" id="O55000"/>
<dbReference type="jPOST" id="O55000"/>
<dbReference type="PaxDb" id="10116-ENSRNOP00000001053"/>
<dbReference type="Ensembl" id="ENSRNOT00000088836.3">
    <property type="protein sequence ID" value="ENSRNOP00000082809.1"/>
    <property type="gene ID" value="ENSRNOG00000059268.3"/>
</dbReference>
<dbReference type="GeneID" id="65045"/>
<dbReference type="KEGG" id="rno:65045"/>
<dbReference type="UCSC" id="RGD:620079">
    <property type="organism name" value="rat"/>
</dbReference>
<dbReference type="AGR" id="RGD:620079"/>
<dbReference type="CTD" id="5514"/>
<dbReference type="RGD" id="620079">
    <property type="gene designation" value="Ppp1r10"/>
</dbReference>
<dbReference type="eggNOG" id="ENOG502QQ2I">
    <property type="taxonomic scope" value="Eukaryota"/>
</dbReference>
<dbReference type="GeneTree" id="ENSGT00940000159263"/>
<dbReference type="InParanoid" id="O55000"/>
<dbReference type="OMA" id="NGPPQIW"/>
<dbReference type="OrthoDB" id="90659at9989"/>
<dbReference type="PhylomeDB" id="O55000"/>
<dbReference type="EvolutionaryTrace" id="O55000"/>
<dbReference type="PRO" id="PR:O55000"/>
<dbReference type="Proteomes" id="UP000002494">
    <property type="component" value="Chromosome 20"/>
</dbReference>
<dbReference type="GO" id="GO:0000785">
    <property type="term" value="C:chromatin"/>
    <property type="evidence" value="ECO:0000314"/>
    <property type="project" value="RGD"/>
</dbReference>
<dbReference type="GO" id="GO:0000781">
    <property type="term" value="C:chromosome, telomeric region"/>
    <property type="evidence" value="ECO:0000266"/>
    <property type="project" value="RGD"/>
</dbReference>
<dbReference type="GO" id="GO:0016604">
    <property type="term" value="C:nuclear body"/>
    <property type="evidence" value="ECO:0007669"/>
    <property type="project" value="Ensembl"/>
</dbReference>
<dbReference type="GO" id="GO:0072357">
    <property type="term" value="C:PTW/PP1 phosphatase complex"/>
    <property type="evidence" value="ECO:0000250"/>
    <property type="project" value="UniProtKB"/>
</dbReference>
<dbReference type="GO" id="GO:0003677">
    <property type="term" value="F:DNA binding"/>
    <property type="evidence" value="ECO:0007669"/>
    <property type="project" value="UniProtKB-KW"/>
</dbReference>
<dbReference type="GO" id="GO:0140767">
    <property type="term" value="F:enzyme-substrate adaptor activity"/>
    <property type="evidence" value="ECO:0000250"/>
    <property type="project" value="UniProtKB"/>
</dbReference>
<dbReference type="GO" id="GO:0008157">
    <property type="term" value="F:protein phosphatase 1 binding"/>
    <property type="evidence" value="ECO:0000314"/>
    <property type="project" value="RGD"/>
</dbReference>
<dbReference type="GO" id="GO:0004864">
    <property type="term" value="F:protein phosphatase inhibitor activity"/>
    <property type="evidence" value="ECO:0000314"/>
    <property type="project" value="UniProtKB"/>
</dbReference>
<dbReference type="GO" id="GO:0003723">
    <property type="term" value="F:RNA binding"/>
    <property type="evidence" value="ECO:0007669"/>
    <property type="project" value="UniProtKB-KW"/>
</dbReference>
<dbReference type="GO" id="GO:0008270">
    <property type="term" value="F:zinc ion binding"/>
    <property type="evidence" value="ECO:0007669"/>
    <property type="project" value="UniProtKB-KW"/>
</dbReference>
<dbReference type="GO" id="GO:0010667">
    <property type="term" value="P:negative regulation of cardiac muscle cell apoptotic process"/>
    <property type="evidence" value="ECO:0000266"/>
    <property type="project" value="RGD"/>
</dbReference>
<dbReference type="GO" id="GO:1904290">
    <property type="term" value="P:negative regulation of mitotic DNA damage checkpoint"/>
    <property type="evidence" value="ECO:0000266"/>
    <property type="project" value="RGD"/>
</dbReference>
<dbReference type="GO" id="GO:0034244">
    <property type="term" value="P:negative regulation of transcription elongation by RNA polymerase II"/>
    <property type="evidence" value="ECO:0000250"/>
    <property type="project" value="UniProtKB"/>
</dbReference>
<dbReference type="GO" id="GO:0032206">
    <property type="term" value="P:positive regulation of telomere maintenance"/>
    <property type="evidence" value="ECO:0000266"/>
    <property type="project" value="RGD"/>
</dbReference>
<dbReference type="GO" id="GO:2000806">
    <property type="term" value="P:positive regulation of termination of RNA polymerase II transcription, poly(A)-coupled"/>
    <property type="evidence" value="ECO:0000250"/>
    <property type="project" value="UniProtKB"/>
</dbReference>
<dbReference type="GO" id="GO:0032968">
    <property type="term" value="P:positive regulation of transcription elongation by RNA polymerase II"/>
    <property type="evidence" value="ECO:0000250"/>
    <property type="project" value="UniProtKB"/>
</dbReference>
<dbReference type="GO" id="GO:0050821">
    <property type="term" value="P:protein stabilization"/>
    <property type="evidence" value="ECO:0007669"/>
    <property type="project" value="Ensembl"/>
</dbReference>
<dbReference type="GO" id="GO:0001111">
    <property type="term" value="P:RNA polymerase II promoter clearance"/>
    <property type="evidence" value="ECO:0000250"/>
    <property type="project" value="UniProtKB"/>
</dbReference>
<dbReference type="CDD" id="cd00183">
    <property type="entry name" value="TFIIS_I"/>
    <property type="match status" value="1"/>
</dbReference>
<dbReference type="DisProt" id="DP01202"/>
<dbReference type="FunFam" id="1.20.930.10:FF:000006">
    <property type="entry name" value="Serine/threonine-protein phosphatase 1 regulatory subunit 10"/>
    <property type="match status" value="1"/>
</dbReference>
<dbReference type="Gene3D" id="1.20.930.10">
    <property type="entry name" value="Conserved domain common to transcription factors TFIIS, elongin A, CRSP70"/>
    <property type="match status" value="1"/>
</dbReference>
<dbReference type="IDEAL" id="IID50266"/>
<dbReference type="InterPro" id="IPR003617">
    <property type="entry name" value="TFIIS/CRSP70_N_sub"/>
</dbReference>
<dbReference type="InterPro" id="IPR035441">
    <property type="entry name" value="TFIIS/LEDGF_dom_sf"/>
</dbReference>
<dbReference type="InterPro" id="IPR017923">
    <property type="entry name" value="TFIIS_N"/>
</dbReference>
<dbReference type="InterPro" id="IPR000571">
    <property type="entry name" value="Znf_CCCH"/>
</dbReference>
<dbReference type="InterPro" id="IPR036855">
    <property type="entry name" value="Znf_CCCH_sf"/>
</dbReference>
<dbReference type="PANTHER" id="PTHR46557">
    <property type="entry name" value="SERINE/THREONINE-PROTEIN PHOSPHATASE 1 REGULATORY SUBUNIT 10-RELATED"/>
    <property type="match status" value="1"/>
</dbReference>
<dbReference type="PANTHER" id="PTHR46557:SF1">
    <property type="entry name" value="SERINE_THREONINE-PROTEIN PHOSPHATASE 1 REGULATORY SUBUNIT 10"/>
    <property type="match status" value="1"/>
</dbReference>
<dbReference type="Pfam" id="PF08711">
    <property type="entry name" value="Med26"/>
    <property type="match status" value="1"/>
</dbReference>
<dbReference type="Pfam" id="PF00642">
    <property type="entry name" value="zf-CCCH"/>
    <property type="match status" value="1"/>
</dbReference>
<dbReference type="SMART" id="SM00509">
    <property type="entry name" value="TFS2N"/>
    <property type="match status" value="1"/>
</dbReference>
<dbReference type="SMART" id="SM00356">
    <property type="entry name" value="ZnF_C3H1"/>
    <property type="match status" value="1"/>
</dbReference>
<dbReference type="SUPFAM" id="SSF90229">
    <property type="entry name" value="CCCH zinc finger"/>
    <property type="match status" value="1"/>
</dbReference>
<dbReference type="SUPFAM" id="SSF47676">
    <property type="entry name" value="Conserved domain common to transcription factors TFIIS, elongin A, CRSP70"/>
    <property type="match status" value="1"/>
</dbReference>
<dbReference type="PROSITE" id="PS51319">
    <property type="entry name" value="TFIIS_N"/>
    <property type="match status" value="1"/>
</dbReference>
<dbReference type="PROSITE" id="PS50103">
    <property type="entry name" value="ZF_C3H1"/>
    <property type="match status" value="1"/>
</dbReference>